<accession>Q5JFP4</accession>
<protein>
    <recommendedName>
        <fullName evidence="1">Phosphoribosylformylglycinamidine synthase subunit PurQ</fullName>
        <shortName evidence="1">FGAM synthase</shortName>
        <ecNumber evidence="1">6.3.5.3</ecNumber>
    </recommendedName>
    <alternativeName>
        <fullName evidence="1">Formylglycinamide ribonucleotide amidotransferase subunit I</fullName>
        <shortName evidence="1">FGAR amidotransferase I</shortName>
        <shortName evidence="1">FGAR-AT I</shortName>
    </alternativeName>
    <alternativeName>
        <fullName evidence="1">Glutaminase PurQ</fullName>
        <ecNumber evidence="1">3.5.1.2</ecNumber>
    </alternativeName>
    <alternativeName>
        <fullName evidence="1">Phosphoribosylformylglycinamidine synthase subunit I</fullName>
    </alternativeName>
</protein>
<feature type="chain" id="PRO_0000100618" description="Phosphoribosylformylglycinamidine synthase subunit PurQ">
    <location>
        <begin position="1"/>
        <end position="223"/>
    </location>
</feature>
<feature type="domain" description="Glutamine amidotransferase type-1" evidence="1">
    <location>
        <begin position="4"/>
        <end position="223"/>
    </location>
</feature>
<feature type="active site" description="Nucleophile" evidence="1">
    <location>
        <position position="85"/>
    </location>
</feature>
<feature type="active site" evidence="1">
    <location>
        <position position="196"/>
    </location>
</feature>
<feature type="active site" evidence="1">
    <location>
        <position position="198"/>
    </location>
</feature>
<gene>
    <name evidence="1" type="primary">purQ</name>
    <name type="ordered locus">TK0201</name>
</gene>
<sequence length="223" mass="24803">MVKFAVVVFPGTNCDFETERAIRKAGAEAERVWYKTSLKDFDGVVLPGGFSYADYLRAGAIAARQEIIEEVKEFARDGKPVLGICNGFQVLTEAGLLPGALRPNKVPRFICRWVHLRVADTETPFTQFYEPGEVIRMPIAHAEGNYYADDPSKVRIAFQYSDEEGNITEEANPNGSLLNIAAIANENGNVLGTMPHPERASDRFLGSEDGLKLFRSMVEWARK</sequence>
<name>PURQ_THEKO</name>
<comment type="function">
    <text evidence="1">Part of the phosphoribosylformylglycinamidine synthase complex involved in the purines biosynthetic pathway. Catalyzes the ATP-dependent conversion of formylglycinamide ribonucleotide (FGAR) and glutamine to yield formylglycinamidine ribonucleotide (FGAM) and glutamate. The FGAM synthase complex is composed of three subunits. PurQ produces an ammonia molecule by converting glutamine to glutamate. PurL transfers the ammonia molecule to FGAR to form FGAM in an ATP-dependent manner. PurS interacts with PurQ and PurL and is thought to assist in the transfer of the ammonia molecule from PurQ to PurL.</text>
</comment>
<comment type="catalytic activity">
    <reaction evidence="1">
        <text>N(2)-formyl-N(1)-(5-phospho-beta-D-ribosyl)glycinamide + L-glutamine + ATP + H2O = 2-formamido-N(1)-(5-O-phospho-beta-D-ribosyl)acetamidine + L-glutamate + ADP + phosphate + H(+)</text>
        <dbReference type="Rhea" id="RHEA:17129"/>
        <dbReference type="ChEBI" id="CHEBI:15377"/>
        <dbReference type="ChEBI" id="CHEBI:15378"/>
        <dbReference type="ChEBI" id="CHEBI:29985"/>
        <dbReference type="ChEBI" id="CHEBI:30616"/>
        <dbReference type="ChEBI" id="CHEBI:43474"/>
        <dbReference type="ChEBI" id="CHEBI:58359"/>
        <dbReference type="ChEBI" id="CHEBI:147286"/>
        <dbReference type="ChEBI" id="CHEBI:147287"/>
        <dbReference type="ChEBI" id="CHEBI:456216"/>
        <dbReference type="EC" id="6.3.5.3"/>
    </reaction>
</comment>
<comment type="catalytic activity">
    <reaction evidence="1">
        <text>L-glutamine + H2O = L-glutamate + NH4(+)</text>
        <dbReference type="Rhea" id="RHEA:15889"/>
        <dbReference type="ChEBI" id="CHEBI:15377"/>
        <dbReference type="ChEBI" id="CHEBI:28938"/>
        <dbReference type="ChEBI" id="CHEBI:29985"/>
        <dbReference type="ChEBI" id="CHEBI:58359"/>
        <dbReference type="EC" id="3.5.1.2"/>
    </reaction>
</comment>
<comment type="pathway">
    <text evidence="1">Purine metabolism; IMP biosynthesis via de novo pathway; 5-amino-1-(5-phospho-D-ribosyl)imidazole from N(2)-formyl-N(1)-(5-phospho-D-ribosyl)glycinamide: step 1/2.</text>
</comment>
<comment type="subunit">
    <text evidence="1">Part of the FGAM synthase complex composed of 1 PurL, 1 PurQ and 2 PurS subunits.</text>
</comment>
<comment type="subcellular location">
    <subcellularLocation>
        <location evidence="1">Cytoplasm</location>
    </subcellularLocation>
</comment>
<organism>
    <name type="scientific">Thermococcus kodakarensis (strain ATCC BAA-918 / JCM 12380 / KOD1)</name>
    <name type="common">Pyrococcus kodakaraensis (strain KOD1)</name>
    <dbReference type="NCBI Taxonomy" id="69014"/>
    <lineage>
        <taxon>Archaea</taxon>
        <taxon>Methanobacteriati</taxon>
        <taxon>Methanobacteriota</taxon>
        <taxon>Thermococci</taxon>
        <taxon>Thermococcales</taxon>
        <taxon>Thermococcaceae</taxon>
        <taxon>Thermococcus</taxon>
    </lineage>
</organism>
<proteinExistence type="inferred from homology"/>
<evidence type="ECO:0000255" key="1">
    <source>
        <dbReference type="HAMAP-Rule" id="MF_00421"/>
    </source>
</evidence>
<keyword id="KW-0067">ATP-binding</keyword>
<keyword id="KW-0963">Cytoplasm</keyword>
<keyword id="KW-0315">Glutamine amidotransferase</keyword>
<keyword id="KW-0378">Hydrolase</keyword>
<keyword id="KW-0436">Ligase</keyword>
<keyword id="KW-0547">Nucleotide-binding</keyword>
<keyword id="KW-0658">Purine biosynthesis</keyword>
<keyword id="KW-1185">Reference proteome</keyword>
<reference key="1">
    <citation type="journal article" date="2005" name="Genome Res.">
        <title>Complete genome sequence of the hyperthermophilic archaeon Thermococcus kodakaraensis KOD1 and comparison with Pyrococcus genomes.</title>
        <authorList>
            <person name="Fukui T."/>
            <person name="Atomi H."/>
            <person name="Kanai T."/>
            <person name="Matsumi R."/>
            <person name="Fujiwara S."/>
            <person name="Imanaka T."/>
        </authorList>
    </citation>
    <scope>NUCLEOTIDE SEQUENCE [LARGE SCALE GENOMIC DNA]</scope>
    <source>
        <strain>ATCC BAA-918 / JCM 12380 / KOD1</strain>
    </source>
</reference>
<dbReference type="EC" id="6.3.5.3" evidence="1"/>
<dbReference type="EC" id="3.5.1.2" evidence="1"/>
<dbReference type="EMBL" id="AP006878">
    <property type="protein sequence ID" value="BAD84390.1"/>
    <property type="molecule type" value="Genomic_DNA"/>
</dbReference>
<dbReference type="RefSeq" id="WP_011249156.1">
    <property type="nucleotide sequence ID" value="NC_006624.1"/>
</dbReference>
<dbReference type="SMR" id="Q5JFP4"/>
<dbReference type="FunCoup" id="Q5JFP4">
    <property type="interactions" value="17"/>
</dbReference>
<dbReference type="STRING" id="69014.TK0201"/>
<dbReference type="EnsemblBacteria" id="BAD84390">
    <property type="protein sequence ID" value="BAD84390"/>
    <property type="gene ID" value="TK0201"/>
</dbReference>
<dbReference type="GeneID" id="78446705"/>
<dbReference type="KEGG" id="tko:TK0201"/>
<dbReference type="PATRIC" id="fig|69014.16.peg.200"/>
<dbReference type="eggNOG" id="arCOG00102">
    <property type="taxonomic scope" value="Archaea"/>
</dbReference>
<dbReference type="HOGENOM" id="CLU_001031_3_1_2"/>
<dbReference type="InParanoid" id="Q5JFP4"/>
<dbReference type="OrthoDB" id="6486at2157"/>
<dbReference type="PhylomeDB" id="Q5JFP4"/>
<dbReference type="UniPathway" id="UPA00074">
    <property type="reaction ID" value="UER00128"/>
</dbReference>
<dbReference type="Proteomes" id="UP000000536">
    <property type="component" value="Chromosome"/>
</dbReference>
<dbReference type="GO" id="GO:0005737">
    <property type="term" value="C:cytoplasm"/>
    <property type="evidence" value="ECO:0007669"/>
    <property type="project" value="UniProtKB-SubCell"/>
</dbReference>
<dbReference type="GO" id="GO:0005524">
    <property type="term" value="F:ATP binding"/>
    <property type="evidence" value="ECO:0007669"/>
    <property type="project" value="UniProtKB-KW"/>
</dbReference>
<dbReference type="GO" id="GO:0004359">
    <property type="term" value="F:glutaminase activity"/>
    <property type="evidence" value="ECO:0007669"/>
    <property type="project" value="UniProtKB-EC"/>
</dbReference>
<dbReference type="GO" id="GO:0004642">
    <property type="term" value="F:phosphoribosylformylglycinamidine synthase activity"/>
    <property type="evidence" value="ECO:0007669"/>
    <property type="project" value="UniProtKB-UniRule"/>
</dbReference>
<dbReference type="GO" id="GO:0006189">
    <property type="term" value="P:'de novo' IMP biosynthetic process"/>
    <property type="evidence" value="ECO:0007669"/>
    <property type="project" value="UniProtKB-UniRule"/>
</dbReference>
<dbReference type="CDD" id="cd01740">
    <property type="entry name" value="GATase1_FGAR_AT"/>
    <property type="match status" value="1"/>
</dbReference>
<dbReference type="Gene3D" id="3.40.50.880">
    <property type="match status" value="1"/>
</dbReference>
<dbReference type="HAMAP" id="MF_00421">
    <property type="entry name" value="PurQ"/>
    <property type="match status" value="1"/>
</dbReference>
<dbReference type="InterPro" id="IPR029062">
    <property type="entry name" value="Class_I_gatase-like"/>
</dbReference>
<dbReference type="InterPro" id="IPR010075">
    <property type="entry name" value="PRibForGlyAmidine_synth_PurQ"/>
</dbReference>
<dbReference type="NCBIfam" id="TIGR01737">
    <property type="entry name" value="FGAM_synth_I"/>
    <property type="match status" value="1"/>
</dbReference>
<dbReference type="NCBIfam" id="NF002957">
    <property type="entry name" value="PRK03619.1"/>
    <property type="match status" value="1"/>
</dbReference>
<dbReference type="PANTHER" id="PTHR47552">
    <property type="entry name" value="PHOSPHORIBOSYLFORMYLGLYCINAMIDINE SYNTHASE SUBUNIT PURQ"/>
    <property type="match status" value="1"/>
</dbReference>
<dbReference type="PANTHER" id="PTHR47552:SF1">
    <property type="entry name" value="PHOSPHORIBOSYLFORMYLGLYCINAMIDINE SYNTHASE SUBUNIT PURQ"/>
    <property type="match status" value="1"/>
</dbReference>
<dbReference type="Pfam" id="PF13507">
    <property type="entry name" value="GATase_5"/>
    <property type="match status" value="1"/>
</dbReference>
<dbReference type="PIRSF" id="PIRSF001586">
    <property type="entry name" value="FGAM_synth_I"/>
    <property type="match status" value="1"/>
</dbReference>
<dbReference type="SMART" id="SM01211">
    <property type="entry name" value="GATase_5"/>
    <property type="match status" value="1"/>
</dbReference>
<dbReference type="SUPFAM" id="SSF52317">
    <property type="entry name" value="Class I glutamine amidotransferase-like"/>
    <property type="match status" value="1"/>
</dbReference>
<dbReference type="PROSITE" id="PS51273">
    <property type="entry name" value="GATASE_TYPE_1"/>
    <property type="match status" value="1"/>
</dbReference>